<organism>
    <name type="scientific">Clostridium botulinum (strain ATCC 19397 / Type A)</name>
    <dbReference type="NCBI Taxonomy" id="441770"/>
    <lineage>
        <taxon>Bacteria</taxon>
        <taxon>Bacillati</taxon>
        <taxon>Bacillota</taxon>
        <taxon>Clostridia</taxon>
        <taxon>Eubacteriales</taxon>
        <taxon>Clostridiaceae</taxon>
        <taxon>Clostridium</taxon>
    </lineage>
</organism>
<protein>
    <recommendedName>
        <fullName evidence="1">5'-nucleotidase SurE</fullName>
        <ecNumber evidence="1">3.1.3.5</ecNumber>
    </recommendedName>
    <alternativeName>
        <fullName evidence="1">Nucleoside 5'-monophosphate phosphohydrolase</fullName>
    </alternativeName>
</protein>
<gene>
    <name evidence="1" type="primary">surE</name>
    <name type="ordered locus">CLB_0274</name>
</gene>
<keyword id="KW-0963">Cytoplasm</keyword>
<keyword id="KW-0378">Hydrolase</keyword>
<keyword id="KW-0479">Metal-binding</keyword>
<keyword id="KW-0547">Nucleotide-binding</keyword>
<sequence>MNILLTNDDGIEAEGINTLAELLSKYHDVIMVAPENQRSASSHSITIYEPIIVKQVKKPYNIEAYSISGTPADCVRVALDKLVPDNIDMVISGINKGLNIGNDILYSGTVSAAIEGAMYKVPSMAVSAQFIKNKKENYKIAAKYALRMLNRLKKEDLKNDVVLNLNIPFCSEEEIKGIKVCKVGNKIFNTRFSEEIDEEGNKVLKLEGDINKDIYEGTDVYYIRNKYVTLTPLHYDLTNFNILEETEQLFLS</sequence>
<comment type="function">
    <text evidence="1">Nucleotidase that shows phosphatase activity on nucleoside 5'-monophosphates.</text>
</comment>
<comment type="catalytic activity">
    <reaction evidence="1">
        <text>a ribonucleoside 5'-phosphate + H2O = a ribonucleoside + phosphate</text>
        <dbReference type="Rhea" id="RHEA:12484"/>
        <dbReference type="ChEBI" id="CHEBI:15377"/>
        <dbReference type="ChEBI" id="CHEBI:18254"/>
        <dbReference type="ChEBI" id="CHEBI:43474"/>
        <dbReference type="ChEBI" id="CHEBI:58043"/>
        <dbReference type="EC" id="3.1.3.5"/>
    </reaction>
</comment>
<comment type="cofactor">
    <cofactor evidence="1">
        <name>a divalent metal cation</name>
        <dbReference type="ChEBI" id="CHEBI:60240"/>
    </cofactor>
    <text evidence="1">Binds 1 divalent metal cation per subunit.</text>
</comment>
<comment type="subcellular location">
    <subcellularLocation>
        <location evidence="1">Cytoplasm</location>
    </subcellularLocation>
</comment>
<comment type="similarity">
    <text evidence="1">Belongs to the SurE nucleotidase family.</text>
</comment>
<proteinExistence type="inferred from homology"/>
<reference key="1">
    <citation type="journal article" date="2007" name="PLoS ONE">
        <title>Analysis of the neurotoxin complex genes in Clostridium botulinum A1-A4 and B1 strains: BoNT/A3, /Ba4 and /B1 clusters are located within plasmids.</title>
        <authorList>
            <person name="Smith T.J."/>
            <person name="Hill K.K."/>
            <person name="Foley B.T."/>
            <person name="Detter J.C."/>
            <person name="Munk A.C."/>
            <person name="Bruce D.C."/>
            <person name="Doggett N.A."/>
            <person name="Smith L.A."/>
            <person name="Marks J.D."/>
            <person name="Xie G."/>
            <person name="Brettin T.S."/>
        </authorList>
    </citation>
    <scope>NUCLEOTIDE SEQUENCE [LARGE SCALE GENOMIC DNA]</scope>
    <source>
        <strain>ATCC 19397 / Type A</strain>
    </source>
</reference>
<feature type="chain" id="PRO_1000007721" description="5'-nucleotidase SurE">
    <location>
        <begin position="1"/>
        <end position="252"/>
    </location>
</feature>
<feature type="binding site" evidence="1">
    <location>
        <position position="8"/>
    </location>
    <ligand>
        <name>a divalent metal cation</name>
        <dbReference type="ChEBI" id="CHEBI:60240"/>
    </ligand>
</feature>
<feature type="binding site" evidence="1">
    <location>
        <position position="9"/>
    </location>
    <ligand>
        <name>a divalent metal cation</name>
        <dbReference type="ChEBI" id="CHEBI:60240"/>
    </ligand>
</feature>
<feature type="binding site" evidence="1">
    <location>
        <position position="39"/>
    </location>
    <ligand>
        <name>a divalent metal cation</name>
        <dbReference type="ChEBI" id="CHEBI:60240"/>
    </ligand>
</feature>
<feature type="binding site" evidence="1">
    <location>
        <position position="95"/>
    </location>
    <ligand>
        <name>a divalent metal cation</name>
        <dbReference type="ChEBI" id="CHEBI:60240"/>
    </ligand>
</feature>
<dbReference type="EC" id="3.1.3.5" evidence="1"/>
<dbReference type="EMBL" id="CP000726">
    <property type="protein sequence ID" value="ABS35723.1"/>
    <property type="molecule type" value="Genomic_DNA"/>
</dbReference>
<dbReference type="RefSeq" id="WP_011948033.1">
    <property type="nucleotide sequence ID" value="NC_009697.1"/>
</dbReference>
<dbReference type="SMR" id="A7FQP3"/>
<dbReference type="GeneID" id="5184488"/>
<dbReference type="KEGG" id="cba:CLB_0274"/>
<dbReference type="HOGENOM" id="CLU_045192_1_3_9"/>
<dbReference type="GO" id="GO:0005737">
    <property type="term" value="C:cytoplasm"/>
    <property type="evidence" value="ECO:0007669"/>
    <property type="project" value="UniProtKB-SubCell"/>
</dbReference>
<dbReference type="GO" id="GO:0008254">
    <property type="term" value="F:3'-nucleotidase activity"/>
    <property type="evidence" value="ECO:0007669"/>
    <property type="project" value="TreeGrafter"/>
</dbReference>
<dbReference type="GO" id="GO:0008253">
    <property type="term" value="F:5'-nucleotidase activity"/>
    <property type="evidence" value="ECO:0007669"/>
    <property type="project" value="UniProtKB-UniRule"/>
</dbReference>
<dbReference type="GO" id="GO:0004309">
    <property type="term" value="F:exopolyphosphatase activity"/>
    <property type="evidence" value="ECO:0007669"/>
    <property type="project" value="TreeGrafter"/>
</dbReference>
<dbReference type="GO" id="GO:0046872">
    <property type="term" value="F:metal ion binding"/>
    <property type="evidence" value="ECO:0007669"/>
    <property type="project" value="UniProtKB-UniRule"/>
</dbReference>
<dbReference type="GO" id="GO:0000166">
    <property type="term" value="F:nucleotide binding"/>
    <property type="evidence" value="ECO:0007669"/>
    <property type="project" value="UniProtKB-KW"/>
</dbReference>
<dbReference type="FunFam" id="3.40.1210.10:FF:000001">
    <property type="entry name" value="5'/3'-nucleotidase SurE"/>
    <property type="match status" value="1"/>
</dbReference>
<dbReference type="Gene3D" id="3.40.1210.10">
    <property type="entry name" value="Survival protein SurE-like phosphatase/nucleotidase"/>
    <property type="match status" value="1"/>
</dbReference>
<dbReference type="HAMAP" id="MF_00060">
    <property type="entry name" value="SurE"/>
    <property type="match status" value="1"/>
</dbReference>
<dbReference type="InterPro" id="IPR030048">
    <property type="entry name" value="SurE"/>
</dbReference>
<dbReference type="InterPro" id="IPR002828">
    <property type="entry name" value="SurE-like_Pase/nucleotidase"/>
</dbReference>
<dbReference type="InterPro" id="IPR036523">
    <property type="entry name" value="SurE-like_sf"/>
</dbReference>
<dbReference type="NCBIfam" id="NF001490">
    <property type="entry name" value="PRK00346.1-4"/>
    <property type="match status" value="1"/>
</dbReference>
<dbReference type="NCBIfam" id="NF010543">
    <property type="entry name" value="PRK13933.1"/>
    <property type="match status" value="1"/>
</dbReference>
<dbReference type="NCBIfam" id="TIGR00087">
    <property type="entry name" value="surE"/>
    <property type="match status" value="1"/>
</dbReference>
<dbReference type="PANTHER" id="PTHR30457">
    <property type="entry name" value="5'-NUCLEOTIDASE SURE"/>
    <property type="match status" value="1"/>
</dbReference>
<dbReference type="PANTHER" id="PTHR30457:SF12">
    <property type="entry name" value="5'_3'-NUCLEOTIDASE SURE"/>
    <property type="match status" value="1"/>
</dbReference>
<dbReference type="Pfam" id="PF01975">
    <property type="entry name" value="SurE"/>
    <property type="match status" value="1"/>
</dbReference>
<dbReference type="SUPFAM" id="SSF64167">
    <property type="entry name" value="SurE-like"/>
    <property type="match status" value="1"/>
</dbReference>
<evidence type="ECO:0000255" key="1">
    <source>
        <dbReference type="HAMAP-Rule" id="MF_00060"/>
    </source>
</evidence>
<accession>A7FQP3</accession>
<name>SURE_CLOB1</name>